<gene>
    <name evidence="5" type="primary">14-3-3I</name>
    <name evidence="9" type="ORF">PF3D7_0818200</name>
</gene>
<organism evidence="10">
    <name type="scientific">Plasmodium falciparum (isolate 3D7)</name>
    <dbReference type="NCBI Taxonomy" id="36329"/>
    <lineage>
        <taxon>Eukaryota</taxon>
        <taxon>Sar</taxon>
        <taxon>Alveolata</taxon>
        <taxon>Apicomplexa</taxon>
        <taxon>Aconoidasida</taxon>
        <taxon>Haemosporida</taxon>
        <taxon>Plasmodiidae</taxon>
        <taxon>Plasmodium</taxon>
        <taxon>Plasmodium (Laverania)</taxon>
    </lineage>
</organism>
<dbReference type="EMBL" id="AL844507">
    <property type="protein sequence ID" value="CAX64133.1"/>
    <property type="molecule type" value="Genomic_DNA"/>
</dbReference>
<dbReference type="RefSeq" id="XP_002808856.1">
    <property type="nucleotide sequence ID" value="XM_002808810.1"/>
</dbReference>
<dbReference type="SMR" id="C0H4V6"/>
<dbReference type="FunCoup" id="C0H4V6">
    <property type="interactions" value="257"/>
</dbReference>
<dbReference type="IntAct" id="C0H4V6">
    <property type="interactions" value="1"/>
</dbReference>
<dbReference type="STRING" id="36329.C0H4V6"/>
<dbReference type="DrugBank" id="DB11638">
    <property type="generic name" value="Artenimol"/>
</dbReference>
<dbReference type="TCDB" id="8.A.98.1.3">
    <property type="family name" value="the 14-3-3 protein (14-3-3) family"/>
</dbReference>
<dbReference type="PaxDb" id="5833-MAL8P1.69"/>
<dbReference type="EnsemblProtists" id="CAX64133">
    <property type="protein sequence ID" value="CAX64133"/>
    <property type="gene ID" value="PF3D7_0818200"/>
</dbReference>
<dbReference type="GeneID" id="2655418"/>
<dbReference type="KEGG" id="pfa:PF3D7_0818200"/>
<dbReference type="VEuPathDB" id="PlasmoDB:PF3D7_0818200"/>
<dbReference type="HOGENOM" id="CLU_058290_0_0_1"/>
<dbReference type="InParanoid" id="C0H4V6"/>
<dbReference type="OMA" id="KGCQLAR"/>
<dbReference type="OrthoDB" id="10260625at2759"/>
<dbReference type="PhylomeDB" id="C0H4V6"/>
<dbReference type="Reactome" id="R-PFA-430116">
    <property type="pathway name" value="GP1b-IX-V activation signalling"/>
</dbReference>
<dbReference type="Reactome" id="R-PFA-5673000">
    <property type="pathway name" value="RAF activation"/>
</dbReference>
<dbReference type="Reactome" id="R-PFA-5675221">
    <property type="pathway name" value="Negative regulation of MAPK pathway"/>
</dbReference>
<dbReference type="Reactome" id="R-PFA-6804114">
    <property type="pathway name" value="TP53 Regulates Transcription of Genes Involved in G2 Cell Cycle Arrest"/>
</dbReference>
<dbReference type="Proteomes" id="UP000001450">
    <property type="component" value="Chromosome 8"/>
</dbReference>
<dbReference type="GO" id="GO:0005737">
    <property type="term" value="C:cytoplasm"/>
    <property type="evidence" value="ECO:0000314"/>
    <property type="project" value="UniProtKB"/>
</dbReference>
<dbReference type="GO" id="GO:0019897">
    <property type="term" value="C:extrinsic component of plasma membrane"/>
    <property type="evidence" value="ECO:0000314"/>
    <property type="project" value="UniProtKB"/>
</dbReference>
<dbReference type="GO" id="GO:0005634">
    <property type="term" value="C:nucleus"/>
    <property type="evidence" value="ECO:0000314"/>
    <property type="project" value="GeneDB"/>
</dbReference>
<dbReference type="GO" id="GO:0032991">
    <property type="term" value="C:protein-containing complex"/>
    <property type="evidence" value="ECO:0000314"/>
    <property type="project" value="UniProtKB"/>
</dbReference>
<dbReference type="GO" id="GO:0042393">
    <property type="term" value="F:histone binding"/>
    <property type="evidence" value="ECO:0000314"/>
    <property type="project" value="GeneDB"/>
</dbReference>
<dbReference type="GO" id="GO:0140566">
    <property type="term" value="F:histone reader activity"/>
    <property type="evidence" value="ECO:0000314"/>
    <property type="project" value="GO_Central"/>
</dbReference>
<dbReference type="GO" id="GO:0019900">
    <property type="term" value="F:kinase binding"/>
    <property type="evidence" value="ECO:0000353"/>
    <property type="project" value="UniProtKB"/>
</dbReference>
<dbReference type="GO" id="GO:0008104">
    <property type="term" value="P:protein localization"/>
    <property type="evidence" value="ECO:0000318"/>
    <property type="project" value="GO_Central"/>
</dbReference>
<dbReference type="GO" id="GO:0007165">
    <property type="term" value="P:signal transduction"/>
    <property type="evidence" value="ECO:0000318"/>
    <property type="project" value="GO_Central"/>
</dbReference>
<dbReference type="CDD" id="cd08774">
    <property type="entry name" value="14-3-3"/>
    <property type="match status" value="1"/>
</dbReference>
<dbReference type="FunFam" id="1.20.190.20:FF:000001">
    <property type="entry name" value="14-3-3 gamma 1"/>
    <property type="match status" value="1"/>
</dbReference>
<dbReference type="Gene3D" id="1.20.190.20">
    <property type="entry name" value="14-3-3 domain"/>
    <property type="match status" value="1"/>
</dbReference>
<dbReference type="InterPro" id="IPR000308">
    <property type="entry name" value="14-3-3"/>
</dbReference>
<dbReference type="InterPro" id="IPR023409">
    <property type="entry name" value="14-3-3_CS"/>
</dbReference>
<dbReference type="InterPro" id="IPR036815">
    <property type="entry name" value="14-3-3_dom_sf"/>
</dbReference>
<dbReference type="InterPro" id="IPR023410">
    <property type="entry name" value="14-3-3_domain"/>
</dbReference>
<dbReference type="PANTHER" id="PTHR18860">
    <property type="entry name" value="14-3-3 PROTEIN"/>
    <property type="match status" value="1"/>
</dbReference>
<dbReference type="Pfam" id="PF00244">
    <property type="entry name" value="14-3-3"/>
    <property type="match status" value="1"/>
</dbReference>
<dbReference type="PIRSF" id="PIRSF000868">
    <property type="entry name" value="14-3-3"/>
    <property type="match status" value="1"/>
</dbReference>
<dbReference type="PRINTS" id="PR00305">
    <property type="entry name" value="1433ZETA"/>
</dbReference>
<dbReference type="SMART" id="SM00101">
    <property type="entry name" value="14_3_3"/>
    <property type="match status" value="1"/>
</dbReference>
<dbReference type="SUPFAM" id="SSF48445">
    <property type="entry name" value="14-3-3 protein"/>
    <property type="match status" value="1"/>
</dbReference>
<dbReference type="PROSITE" id="PS00796">
    <property type="entry name" value="1433_1"/>
    <property type="match status" value="1"/>
</dbReference>
<dbReference type="PROSITE" id="PS00797">
    <property type="entry name" value="1433_2"/>
    <property type="match status" value="1"/>
</dbReference>
<proteinExistence type="evidence at protein level"/>
<sequence>MATSEELKQLRCDCTYRSKLAEQAERYDEMADAMRTLVEQCVNNDKDELTVEERNLLSVAYKNAVGARRASWRIISSVEQKEMSKANVHNKNVAATYRKKVEEELNNICQDILNLLTKKLIPNTSESESKVFYYKMKGDYYRYISEFSCDEGKKEASNCAQEAYQKATDIAENELPSTHPIRLGLALNYSVFFYEILNQPHQACEMAKRAFDDAITEFDNVSEDSYKDSTLIMQLLRDNLTLWTSDLQGDQTEEKSKDEGLE</sequence>
<evidence type="ECO:0000255" key="1">
    <source>
        <dbReference type="RuleBase" id="RU003466"/>
    </source>
</evidence>
<evidence type="ECO:0000269" key="2">
    <source>
    </source>
</evidence>
<evidence type="ECO:0000269" key="3">
    <source>
    </source>
</evidence>
<evidence type="ECO:0000269" key="4">
    <source>
    </source>
</evidence>
<evidence type="ECO:0000303" key="5">
    <source>
    </source>
</evidence>
<evidence type="ECO:0000305" key="6"/>
<evidence type="ECO:0000305" key="7">
    <source>
    </source>
</evidence>
<evidence type="ECO:0000305" key="8">
    <source>
    </source>
</evidence>
<evidence type="ECO:0000312" key="9">
    <source>
        <dbReference type="EMBL" id="CAX64133.1"/>
    </source>
</evidence>
<evidence type="ECO:0000312" key="10">
    <source>
        <dbReference type="Proteomes" id="UP000001450"/>
    </source>
</evidence>
<feature type="chain" id="PRO_0000453004" description="14-3-3 protein I">
    <location>
        <begin position="1"/>
        <end position="262"/>
    </location>
</feature>
<protein>
    <recommendedName>
        <fullName evidence="6">14-3-3 protein I</fullName>
    </recommendedName>
    <alternativeName>
        <fullName evidence="5">Pf14-3-3I</fullName>
    </alternativeName>
</protein>
<comment type="function">
    <text evidence="2 3 4 8">Adapter protein which binds to its partners, usually via a phosphoserine or phosphothreonine motif (PubMed:23308157, PubMed:32484216, PubMed:32817103). Binding generally results in the modulation of the activity and/or cellular localization of the binding partner (Probable). Via its interaction with CDPK1 and PKAr, involved in merozoite microneme secretion and thus in merozoite invasion of host erythrocytes (PubMed:32817103).</text>
</comment>
<comment type="subunit">
    <text evidence="2 3 4 7">Homodimer (Probable). Forms a complex composed of CDPK1, PKA regulatory subunit PKAr and 14-3-3I; the complex is formed in merozoites in response to low extracellular level of K(+) and may play a role in microneme secretion (PubMed:32817103). Interacts with CDPK1 (when phosphorylated) in a Ca(2+)-independent manner; the interaction does not regulate CDPK1 catalytic activity but is required for merozoite invasion of host erythrocytes (PubMed:32484216, PubMed:32817103). Interacts with PKA regulatory subunit PKAr (when phosphorylated) in a Ca(2+)-dependent manner (PubMed:32817103). Interacts with histone H3 (when phosphorylated at 'Ser-28' or when phosphorylated at 'Ser-28' and 'Ser-32') (PubMed:23308157).</text>
</comment>
<comment type="subcellular location">
    <subcellularLocation>
        <location evidence="3">Cell membrane</location>
        <topology evidence="6">Peripheral membrane protein</topology>
        <orientation evidence="3">Cytoplasmic side</orientation>
    </subcellularLocation>
    <subcellularLocation>
        <location evidence="2 3">Cytoplasm</location>
    </subcellularLocation>
    <subcellularLocation>
        <location evidence="2">Nucleus</location>
    </subcellularLocation>
</comment>
<comment type="developmental stage">
    <text evidence="2 3 4">Expressed during parasite asexual blood stages, at the ring, trophozoite and schizont stages and in free merozoites (at protein level).</text>
</comment>
<comment type="similarity">
    <text evidence="1">Belongs to the 14-3-3 family.</text>
</comment>
<name>1433I_PLAF7</name>
<accession>C0H4V6</accession>
<keyword id="KW-1003">Cell membrane</keyword>
<keyword id="KW-0963">Cytoplasm</keyword>
<keyword id="KW-0472">Membrane</keyword>
<keyword id="KW-0539">Nucleus</keyword>
<keyword id="KW-1185">Reference proteome</keyword>
<reference evidence="10" key="1">
    <citation type="journal article" date="2002" name="Nature">
        <title>Genome sequence of the human malaria parasite Plasmodium falciparum.</title>
        <authorList>
            <person name="Gardner M.J."/>
            <person name="Hall N."/>
            <person name="Fung E."/>
            <person name="White O."/>
            <person name="Berriman M."/>
            <person name="Hyman R.W."/>
            <person name="Carlton J.M."/>
            <person name="Pain A."/>
            <person name="Nelson K.E."/>
            <person name="Bowman S."/>
            <person name="Paulsen I.T."/>
            <person name="James K.D."/>
            <person name="Eisen J.A."/>
            <person name="Rutherford K.M."/>
            <person name="Salzberg S.L."/>
            <person name="Craig A."/>
            <person name="Kyes S."/>
            <person name="Chan M.-S."/>
            <person name="Nene V."/>
            <person name="Shallom S.J."/>
            <person name="Suh B."/>
            <person name="Peterson J."/>
            <person name="Angiuoli S."/>
            <person name="Pertea M."/>
            <person name="Allen J."/>
            <person name="Selengut J."/>
            <person name="Haft D."/>
            <person name="Mather M.W."/>
            <person name="Vaidya A.B."/>
            <person name="Martin D.M.A."/>
            <person name="Fairlamb A.H."/>
            <person name="Fraunholz M.J."/>
            <person name="Roos D.S."/>
            <person name="Ralph S.A."/>
            <person name="McFadden G.I."/>
            <person name="Cummings L.M."/>
            <person name="Subramanian G.M."/>
            <person name="Mungall C."/>
            <person name="Venter J.C."/>
            <person name="Carucci D.J."/>
            <person name="Hoffman S.L."/>
            <person name="Newbold C."/>
            <person name="Davis R.W."/>
            <person name="Fraser C.M."/>
            <person name="Barrell B.G."/>
        </authorList>
    </citation>
    <scope>NUCLEOTIDE SEQUENCE [LARGE SCALE GENOMIC DNA]</scope>
    <source>
        <strain evidence="10">3D7</strain>
    </source>
</reference>
<reference evidence="10" key="2">
    <citation type="journal article" date="2002" name="Nature">
        <title>Sequence of Plasmodium falciparum chromosomes 1, 3-9 and 13.</title>
        <authorList>
            <person name="Hall N."/>
            <person name="Pain A."/>
            <person name="Berriman M."/>
            <person name="Churcher C.M."/>
            <person name="Harris B."/>
            <person name="Harris D."/>
            <person name="Mungall K.L."/>
            <person name="Bowman S."/>
            <person name="Atkin R."/>
            <person name="Baker S."/>
            <person name="Barron A."/>
            <person name="Brooks K."/>
            <person name="Buckee C.O."/>
            <person name="Burrows C."/>
            <person name="Cherevach I."/>
            <person name="Chillingworth C."/>
            <person name="Chillingworth T."/>
            <person name="Christodoulou Z."/>
            <person name="Clark L."/>
            <person name="Clark R."/>
            <person name="Corton C."/>
            <person name="Cronin A."/>
            <person name="Davies R.M."/>
            <person name="Davis P."/>
            <person name="Dear P."/>
            <person name="Dearden F."/>
            <person name="Doggett J."/>
            <person name="Feltwell T."/>
            <person name="Goble A."/>
            <person name="Goodhead I."/>
            <person name="Gwilliam R."/>
            <person name="Hamlin N."/>
            <person name="Hance Z."/>
            <person name="Harper D."/>
            <person name="Hauser H."/>
            <person name="Hornsby T."/>
            <person name="Holroyd S."/>
            <person name="Horrocks P."/>
            <person name="Humphray S."/>
            <person name="Jagels K."/>
            <person name="James K.D."/>
            <person name="Johnson D."/>
            <person name="Kerhornou A."/>
            <person name="Knights A."/>
            <person name="Konfortov B."/>
            <person name="Kyes S."/>
            <person name="Larke N."/>
            <person name="Lawson D."/>
            <person name="Lennard N."/>
            <person name="Line A."/>
            <person name="Maddison M."/>
            <person name="Mclean J."/>
            <person name="Mooney P."/>
            <person name="Moule S."/>
            <person name="Murphy L."/>
            <person name="Oliver K."/>
            <person name="Ormond D."/>
            <person name="Price C."/>
            <person name="Quail M.A."/>
            <person name="Rabbinowitsch E."/>
            <person name="Rajandream M.A."/>
            <person name="Rutter S."/>
            <person name="Rutherford K.M."/>
            <person name="Sanders M."/>
            <person name="Simmonds M."/>
            <person name="Seeger K."/>
            <person name="Sharp S."/>
            <person name="Smith R."/>
            <person name="Squares R."/>
            <person name="Squares S."/>
            <person name="Stevens K."/>
            <person name="Taylor K."/>
            <person name="Tivey A."/>
            <person name="Unwin L."/>
            <person name="Whitehead S."/>
            <person name="Woodward J.R."/>
            <person name="Sulston J.E."/>
            <person name="Craig A."/>
            <person name="Newbold C."/>
            <person name="Barrell B.G."/>
        </authorList>
    </citation>
    <scope>NUCLEOTIDE SEQUENCE [LARGE SCALE GENOMIC DNA]</scope>
    <source>
        <strain evidence="10">3D7</strain>
    </source>
</reference>
<reference evidence="6" key="3">
    <citation type="journal article" date="2013" name="PLoS ONE">
        <title>Comprehensive histone phosphorylation analysis and identification of Pf14-3-3 protein as a histone H3 phosphorylation reader in malaria parasites.</title>
        <authorList>
            <person name="Dastidar E.G."/>
            <person name="Dzeyk K."/>
            <person name="Krijgsveld J."/>
            <person name="Malmquist N.A."/>
            <person name="Doerig C."/>
            <person name="Scherf A."/>
            <person name="Lopez-Rubio J.J."/>
        </authorList>
    </citation>
    <scope>FUNCTION</scope>
    <scope>INTERACTION WITH H3</scope>
    <scope>SUBCELLULAR LOCATION</scope>
    <scope>DEVELOPMENTAL STAGE</scope>
</reference>
<reference evidence="6" key="4">
    <citation type="journal article" date="2020" name="Biochem. J.">
        <title>Molecular dynamics simulations and biochemical characterization of Pf14-3-3 and PfCDPK1 interaction towards its role in growth of human malaria parasite.</title>
        <authorList>
            <person name="Jain R."/>
            <person name="Dey P."/>
            <person name="Gupta S."/>
            <person name="Pati S."/>
            <person name="Bhattacherjee A."/>
            <person name="Munde M."/>
            <person name="Singh S."/>
        </authorList>
    </citation>
    <scope>FUNCTION</scope>
    <scope>SUBUNIT</scope>
    <scope>INTERACTION WITH CDPK1</scope>
    <scope>SUBCELLULAR LOCATION</scope>
    <scope>DEVELOPMENTAL STAGE</scope>
</reference>
<reference evidence="6" key="5">
    <citation type="journal article" date="2020" name="MBio">
        <title>Phosphorylation-Dependent Assembly of a 14-3-3 Mediated Signaling Complex during Red Blood Cell Invasion by Plasmodium falciparum Merozoites.</title>
        <authorList>
            <person name="More K.R."/>
            <person name="Kaur I."/>
            <person name="Giai Gianetto Q."/>
            <person name="Invergo B.M."/>
            <person name="Chaze T."/>
            <person name="Jain R."/>
            <person name="Huon C."/>
            <person name="Gutenbrunner P."/>
            <person name="Weisser H."/>
            <person name="Matondo M."/>
            <person name="Choudhary J.S."/>
            <person name="Langsley G."/>
            <person name="Singh S."/>
            <person name="Chitnis C.E."/>
        </authorList>
    </citation>
    <scope>FUNCTION</scope>
    <scope>IDENTIFICATION IN A COMPLEX WITH PKAR AND CDPK1</scope>
    <scope>INTERACTION WITH CDPK1 AND 14-3-3I</scope>
    <scope>DEVELOPMENTAL STAGE</scope>
    <scope>IDENTIFICATION BY MASS SPECTROMETRY</scope>
</reference>